<comment type="similarity">
    <text evidence="1">Belongs to the universal ribosomal protein uL29 family.</text>
</comment>
<comment type="sequence caution" evidence="1">
    <conflict type="erroneous initiation">
        <sequence resource="EMBL-CDS" id="BAA30887"/>
    </conflict>
    <text>Truncated N-terminus.</text>
</comment>
<sequence>MKPSEIREMSIEEIDAKIRELRLQLAKERGMLTMGTSLENPMVIRNLRRDIARLLTIKKEKLREMGKK</sequence>
<keyword id="KW-0687">Ribonucleoprotein</keyword>
<keyword id="KW-0689">Ribosomal protein</keyword>
<proteinExistence type="inferred from homology"/>
<name>RL29_PYRHO</name>
<dbReference type="EMBL" id="BA000001">
    <property type="protein sequence ID" value="BAA30887.1"/>
    <property type="status" value="ALT_INIT"/>
    <property type="molecule type" value="Genomic_DNA"/>
</dbReference>
<dbReference type="PIR" id="H71186">
    <property type="entry name" value="H71186"/>
</dbReference>
<dbReference type="RefSeq" id="WP_010885834.1">
    <property type="nucleotide sequence ID" value="NC_000961.1"/>
</dbReference>
<dbReference type="SMR" id="O74094"/>
<dbReference type="STRING" id="70601.gene:9378770"/>
<dbReference type="EnsemblBacteria" id="BAA30887">
    <property type="protein sequence ID" value="BAA30887"/>
    <property type="gene ID" value="BAA30887"/>
</dbReference>
<dbReference type="GeneID" id="1442616"/>
<dbReference type="KEGG" id="pho:PHS048"/>
<dbReference type="eggNOG" id="arCOG00785">
    <property type="taxonomic scope" value="Archaea"/>
</dbReference>
<dbReference type="OrthoDB" id="11736at2157"/>
<dbReference type="Proteomes" id="UP000000752">
    <property type="component" value="Chromosome"/>
</dbReference>
<dbReference type="GO" id="GO:1990904">
    <property type="term" value="C:ribonucleoprotein complex"/>
    <property type="evidence" value="ECO:0007669"/>
    <property type="project" value="UniProtKB-KW"/>
</dbReference>
<dbReference type="GO" id="GO:0005840">
    <property type="term" value="C:ribosome"/>
    <property type="evidence" value="ECO:0007669"/>
    <property type="project" value="UniProtKB-KW"/>
</dbReference>
<dbReference type="GO" id="GO:0003735">
    <property type="term" value="F:structural constituent of ribosome"/>
    <property type="evidence" value="ECO:0007669"/>
    <property type="project" value="InterPro"/>
</dbReference>
<dbReference type="GO" id="GO:0006412">
    <property type="term" value="P:translation"/>
    <property type="evidence" value="ECO:0007669"/>
    <property type="project" value="UniProtKB-UniRule"/>
</dbReference>
<dbReference type="CDD" id="cd00427">
    <property type="entry name" value="Ribosomal_L29_HIP"/>
    <property type="match status" value="1"/>
</dbReference>
<dbReference type="Gene3D" id="1.10.287.310">
    <property type="match status" value="1"/>
</dbReference>
<dbReference type="HAMAP" id="MF_00374">
    <property type="entry name" value="Ribosomal_uL29"/>
    <property type="match status" value="1"/>
</dbReference>
<dbReference type="InterPro" id="IPR001854">
    <property type="entry name" value="Ribosomal_uL29"/>
</dbReference>
<dbReference type="InterPro" id="IPR018254">
    <property type="entry name" value="Ribosomal_uL29_CS"/>
</dbReference>
<dbReference type="InterPro" id="IPR036049">
    <property type="entry name" value="Ribosomal_uL29_sf"/>
</dbReference>
<dbReference type="NCBIfam" id="TIGR00012">
    <property type="entry name" value="L29"/>
    <property type="match status" value="1"/>
</dbReference>
<dbReference type="Pfam" id="PF00831">
    <property type="entry name" value="Ribosomal_L29"/>
    <property type="match status" value="1"/>
</dbReference>
<dbReference type="SUPFAM" id="SSF46561">
    <property type="entry name" value="Ribosomal protein L29 (L29p)"/>
    <property type="match status" value="1"/>
</dbReference>
<dbReference type="PROSITE" id="PS00579">
    <property type="entry name" value="RIBOSOMAL_L29"/>
    <property type="match status" value="1"/>
</dbReference>
<accession>O74094</accession>
<feature type="chain" id="PRO_0000130521" description="Large ribosomal subunit protein uL29">
    <location>
        <begin position="1"/>
        <end position="68"/>
    </location>
</feature>
<protein>
    <recommendedName>
        <fullName evidence="1">Large ribosomal subunit protein uL29</fullName>
    </recommendedName>
    <alternativeName>
        <fullName>50S ribosomal protein L29</fullName>
    </alternativeName>
</protein>
<gene>
    <name type="primary">rpl29</name>
    <name type="ordered locus">PH1771.2</name>
    <name type="ORF">PHS048</name>
</gene>
<evidence type="ECO:0000305" key="1"/>
<organism>
    <name type="scientific">Pyrococcus horikoshii (strain ATCC 700860 / DSM 12428 / JCM 9974 / NBRC 100139 / OT-3)</name>
    <dbReference type="NCBI Taxonomy" id="70601"/>
    <lineage>
        <taxon>Archaea</taxon>
        <taxon>Methanobacteriati</taxon>
        <taxon>Methanobacteriota</taxon>
        <taxon>Thermococci</taxon>
        <taxon>Thermococcales</taxon>
        <taxon>Thermococcaceae</taxon>
        <taxon>Pyrococcus</taxon>
    </lineage>
</organism>
<reference key="1">
    <citation type="journal article" date="1998" name="DNA Res.">
        <title>Complete sequence and gene organization of the genome of a hyper-thermophilic archaebacterium, Pyrococcus horikoshii OT3.</title>
        <authorList>
            <person name="Kawarabayasi Y."/>
            <person name="Sawada M."/>
            <person name="Horikawa H."/>
            <person name="Haikawa Y."/>
            <person name="Hino Y."/>
            <person name="Yamamoto S."/>
            <person name="Sekine M."/>
            <person name="Baba S."/>
            <person name="Kosugi H."/>
            <person name="Hosoyama A."/>
            <person name="Nagai Y."/>
            <person name="Sakai M."/>
            <person name="Ogura K."/>
            <person name="Otsuka R."/>
            <person name="Nakazawa H."/>
            <person name="Takamiya M."/>
            <person name="Ohfuku Y."/>
            <person name="Funahashi T."/>
            <person name="Tanaka T."/>
            <person name="Kudoh Y."/>
            <person name="Yamazaki J."/>
            <person name="Kushida N."/>
            <person name="Oguchi A."/>
            <person name="Aoki K."/>
            <person name="Yoshizawa T."/>
            <person name="Nakamura Y."/>
            <person name="Robb F.T."/>
            <person name="Horikoshi K."/>
            <person name="Masuchi Y."/>
            <person name="Shizuya H."/>
            <person name="Kikuchi H."/>
        </authorList>
    </citation>
    <scope>NUCLEOTIDE SEQUENCE [LARGE SCALE GENOMIC DNA]</scope>
    <source>
        <strain>ATCC 700860 / DSM 12428 / JCM 9974 / NBRC 100139 / OT-3</strain>
    </source>
</reference>